<gene>
    <name evidence="1" type="primary">rnfH</name>
    <name type="ordered locus">SeSA_A2881</name>
</gene>
<sequence>MPDKLVVEVAYALPEKQYLQRVTLEEGATVEEAIRASGLLELRTDIDLAKNKVGIYSRPVKLTDTVQDGDRVEIYRPLIADPKALRRQRAEKSAGR</sequence>
<name>RNFH_SALSV</name>
<dbReference type="EMBL" id="CP001127">
    <property type="protein sequence ID" value="ACF90091.1"/>
    <property type="molecule type" value="Genomic_DNA"/>
</dbReference>
<dbReference type="RefSeq" id="WP_001112990.1">
    <property type="nucleotide sequence ID" value="NC_011094.1"/>
</dbReference>
<dbReference type="SMR" id="B4TS65"/>
<dbReference type="KEGG" id="sew:SeSA_A2881"/>
<dbReference type="HOGENOM" id="CLU_150721_1_0_6"/>
<dbReference type="Proteomes" id="UP000001865">
    <property type="component" value="Chromosome"/>
</dbReference>
<dbReference type="Gene3D" id="3.10.20.280">
    <property type="entry name" value="RnfH-like"/>
    <property type="match status" value="1"/>
</dbReference>
<dbReference type="HAMAP" id="MF_00460">
    <property type="entry name" value="UPF0125_RnfH"/>
    <property type="match status" value="1"/>
</dbReference>
<dbReference type="InterPro" id="IPR016155">
    <property type="entry name" value="Mopterin_synth/thiamin_S_b"/>
</dbReference>
<dbReference type="InterPro" id="IPR005346">
    <property type="entry name" value="RnfH"/>
</dbReference>
<dbReference type="InterPro" id="IPR037021">
    <property type="entry name" value="RnfH_sf"/>
</dbReference>
<dbReference type="NCBIfam" id="NF002490">
    <property type="entry name" value="PRK01777.1"/>
    <property type="match status" value="1"/>
</dbReference>
<dbReference type="PANTHER" id="PTHR37483">
    <property type="entry name" value="UPF0125 PROTEIN RATB"/>
    <property type="match status" value="1"/>
</dbReference>
<dbReference type="PANTHER" id="PTHR37483:SF1">
    <property type="entry name" value="UPF0125 PROTEIN RATB"/>
    <property type="match status" value="1"/>
</dbReference>
<dbReference type="Pfam" id="PF03658">
    <property type="entry name" value="Ub-RnfH"/>
    <property type="match status" value="1"/>
</dbReference>
<dbReference type="SUPFAM" id="SSF54285">
    <property type="entry name" value="MoaD/ThiS"/>
    <property type="match status" value="1"/>
</dbReference>
<organism>
    <name type="scientific">Salmonella schwarzengrund (strain CVM19633)</name>
    <dbReference type="NCBI Taxonomy" id="439843"/>
    <lineage>
        <taxon>Bacteria</taxon>
        <taxon>Pseudomonadati</taxon>
        <taxon>Pseudomonadota</taxon>
        <taxon>Gammaproteobacteria</taxon>
        <taxon>Enterobacterales</taxon>
        <taxon>Enterobacteriaceae</taxon>
        <taxon>Salmonella</taxon>
    </lineage>
</organism>
<evidence type="ECO:0000255" key="1">
    <source>
        <dbReference type="HAMAP-Rule" id="MF_00460"/>
    </source>
</evidence>
<reference key="1">
    <citation type="journal article" date="2011" name="J. Bacteriol.">
        <title>Comparative genomics of 28 Salmonella enterica isolates: evidence for CRISPR-mediated adaptive sublineage evolution.</title>
        <authorList>
            <person name="Fricke W.F."/>
            <person name="Mammel M.K."/>
            <person name="McDermott P.F."/>
            <person name="Tartera C."/>
            <person name="White D.G."/>
            <person name="Leclerc J.E."/>
            <person name="Ravel J."/>
            <person name="Cebula T.A."/>
        </authorList>
    </citation>
    <scope>NUCLEOTIDE SEQUENCE [LARGE SCALE GENOMIC DNA]</scope>
    <source>
        <strain>CVM19633</strain>
    </source>
</reference>
<accession>B4TS65</accession>
<feature type="chain" id="PRO_1000200197" description="Protein RnfH">
    <location>
        <begin position="1"/>
        <end position="96"/>
    </location>
</feature>
<comment type="similarity">
    <text evidence="1">Belongs to the UPF0125 (RnfH) family.</text>
</comment>
<proteinExistence type="inferred from homology"/>
<protein>
    <recommendedName>
        <fullName evidence="1">Protein RnfH</fullName>
    </recommendedName>
</protein>